<keyword id="KW-1015">Disulfide bond</keyword>
<keyword id="KW-0964">Secreted</keyword>
<keyword id="KW-0732">Signal</keyword>
<keyword id="KW-0800">Toxin</keyword>
<evidence type="ECO:0000255" key="1"/>
<evidence type="ECO:0000303" key="2">
    <source>
    </source>
</evidence>
<evidence type="ECO:0000305" key="3"/>
<evidence type="ECO:0000305" key="4">
    <source>
    </source>
</evidence>
<proteinExistence type="inferred from homology"/>
<name>TXG1A_SCOMO</name>
<protein>
    <recommendedName>
        <fullName evidence="2">U-scoloptoxin(16)-Sm1a</fullName>
        <shortName evidence="2">U-SLPTX(16)-Sm1a</shortName>
    </recommendedName>
</protein>
<reference key="1">
    <citation type="journal article" date="2014" name="Mol. Biol. Evol.">
        <title>Clawing through evolution: toxin diversification and convergence in the ancient lineage Chilopoda (centipedes).</title>
        <authorList>
            <person name="Undheim E.A."/>
            <person name="Jones A."/>
            <person name="Clauser K.R."/>
            <person name="Holland J.W."/>
            <person name="Pineda S.S."/>
            <person name="King G.F."/>
            <person name="Fry B.G."/>
        </authorList>
    </citation>
    <scope>NUCLEOTIDE SEQUENCE [MRNA]</scope>
    <scope>NOMENCLATURE</scope>
    <source>
        <tissue>Venom gland</tissue>
    </source>
</reference>
<comment type="subcellular location">
    <subcellularLocation>
        <location evidence="4">Secreted</location>
    </subcellularLocation>
</comment>
<comment type="tissue specificity">
    <text evidence="4">Expressed by the venom gland.</text>
</comment>
<comment type="PTM">
    <text evidence="3">Contains 4 disulfide bonds.</text>
</comment>
<comment type="similarity">
    <text evidence="3">Belongs to the scoloptoxin-16 family.</text>
</comment>
<comment type="caution">
    <text evidence="4">All S.morsitans family members described in 'Undeheim et al., 2014' have not been imported into UniProtKB. Please, refer to this paper to access them.</text>
</comment>
<comment type="online information" name="National Center for Biotechnology Information (NCBI)">
    <link uri="https://www.ncbi.nlm.nih.gov/nuccore/GASH01000160"/>
</comment>
<organism>
    <name type="scientific">Scolopendra morsitans</name>
    <name type="common">Tanzanian blue ringleg centipede</name>
    <dbReference type="NCBI Taxonomy" id="943129"/>
    <lineage>
        <taxon>Eukaryota</taxon>
        <taxon>Metazoa</taxon>
        <taxon>Ecdysozoa</taxon>
        <taxon>Arthropoda</taxon>
        <taxon>Myriapoda</taxon>
        <taxon>Chilopoda</taxon>
        <taxon>Pleurostigmophora</taxon>
        <taxon>Scolopendromorpha</taxon>
        <taxon>Scolopendridae</taxon>
        <taxon>Scolopendra</taxon>
    </lineage>
</organism>
<feature type="signal peptide" evidence="1">
    <location>
        <begin position="1"/>
        <end position="19"/>
    </location>
</feature>
<feature type="chain" id="PRO_0000446804" description="U-scoloptoxin(16)-Sm1a" evidence="3">
    <location>
        <begin position="20"/>
        <end position="108"/>
    </location>
</feature>
<accession>P0DQG8</accession>
<dbReference type="GO" id="GO:0005576">
    <property type="term" value="C:extracellular region"/>
    <property type="evidence" value="ECO:0007669"/>
    <property type="project" value="UniProtKB-SubCell"/>
</dbReference>
<dbReference type="GO" id="GO:0090729">
    <property type="term" value="F:toxin activity"/>
    <property type="evidence" value="ECO:0007669"/>
    <property type="project" value="UniProtKB-KW"/>
</dbReference>
<dbReference type="InterPro" id="IPR029277">
    <property type="entry name" value="SVWC_dom"/>
</dbReference>
<dbReference type="Pfam" id="PF15430">
    <property type="entry name" value="SVWC"/>
    <property type="match status" value="1"/>
</dbReference>
<sequence length="108" mass="12209">MNLFLVLFVFSFSVSQFFAVEAGGRKHKHQEVCIGSDGKGHQLNQFWYDNGNCRRFYCYKDEDGLVIEQTTNCELAVAENDCRIKPGKAGRYPDCCPSVECPQESKAS</sequence>